<keyword id="KW-0963">Cytoplasm</keyword>
<keyword id="KW-0238">DNA-binding</keyword>
<keyword id="KW-1185">Reference proteome</keyword>
<keyword id="KW-0678">Repressor</keyword>
<keyword id="KW-0804">Transcription</keyword>
<keyword id="KW-0805">Transcription regulation</keyword>
<organism>
    <name type="scientific">Escherichia coli O157:H7</name>
    <dbReference type="NCBI Taxonomy" id="83334"/>
    <lineage>
        <taxon>Bacteria</taxon>
        <taxon>Pseudomonadati</taxon>
        <taxon>Pseudomonadota</taxon>
        <taxon>Gammaproteobacteria</taxon>
        <taxon>Enterobacterales</taxon>
        <taxon>Enterobacteriaceae</taxon>
        <taxon>Escherichia</taxon>
    </lineage>
</organism>
<evidence type="ECO:0000255" key="1">
    <source>
        <dbReference type="HAMAP-Rule" id="MF_01563"/>
    </source>
</evidence>
<accession>P0A9W2</accession>
<accession>P39299</accession>
<feature type="chain" id="PRO_0000050278" description="HTH-type transcriptional regulator UlaR">
    <location>
        <begin position="1"/>
        <end position="251"/>
    </location>
</feature>
<feature type="domain" description="HTH deoR-type" evidence="1">
    <location>
        <begin position="3"/>
        <end position="58"/>
    </location>
</feature>
<feature type="DNA-binding region" description="H-T-H motif" evidence="1">
    <location>
        <begin position="20"/>
        <end position="39"/>
    </location>
</feature>
<dbReference type="EMBL" id="AE005174">
    <property type="protein sequence ID" value="AAG59387.1"/>
    <property type="molecule type" value="Genomic_DNA"/>
</dbReference>
<dbReference type="EMBL" id="BA000007">
    <property type="protein sequence ID" value="BAB38590.1"/>
    <property type="molecule type" value="Genomic_DNA"/>
</dbReference>
<dbReference type="PIR" id="G86115">
    <property type="entry name" value="G86115"/>
</dbReference>
<dbReference type="PIR" id="G91274">
    <property type="entry name" value="G91274"/>
</dbReference>
<dbReference type="RefSeq" id="NP_313194.1">
    <property type="nucleotide sequence ID" value="NC_002695.1"/>
</dbReference>
<dbReference type="RefSeq" id="WP_000133631.1">
    <property type="nucleotide sequence ID" value="NZ_VOAI01000008.1"/>
</dbReference>
<dbReference type="SMR" id="P0A9W2"/>
<dbReference type="STRING" id="155864.Z5800"/>
<dbReference type="GeneID" id="75202425"/>
<dbReference type="GeneID" id="914012"/>
<dbReference type="KEGG" id="ece:Z5800"/>
<dbReference type="KEGG" id="ecs:ECs_5167"/>
<dbReference type="PATRIC" id="fig|386585.9.peg.5401"/>
<dbReference type="eggNOG" id="COG1349">
    <property type="taxonomic scope" value="Bacteria"/>
</dbReference>
<dbReference type="HOGENOM" id="CLU_060699_3_2_6"/>
<dbReference type="OMA" id="FDNDVTR"/>
<dbReference type="Proteomes" id="UP000000558">
    <property type="component" value="Chromosome"/>
</dbReference>
<dbReference type="Proteomes" id="UP000002519">
    <property type="component" value="Chromosome"/>
</dbReference>
<dbReference type="GO" id="GO:0005737">
    <property type="term" value="C:cytoplasm"/>
    <property type="evidence" value="ECO:0007669"/>
    <property type="project" value="UniProtKB-SubCell"/>
</dbReference>
<dbReference type="GO" id="GO:0003677">
    <property type="term" value="F:DNA binding"/>
    <property type="evidence" value="ECO:0007669"/>
    <property type="project" value="UniProtKB-KW"/>
</dbReference>
<dbReference type="GO" id="GO:0003700">
    <property type="term" value="F:DNA-binding transcription factor activity"/>
    <property type="evidence" value="ECO:0007669"/>
    <property type="project" value="InterPro"/>
</dbReference>
<dbReference type="GO" id="GO:0045892">
    <property type="term" value="P:negative regulation of DNA-templated transcription"/>
    <property type="evidence" value="ECO:0007669"/>
    <property type="project" value="UniProtKB-UniRule"/>
</dbReference>
<dbReference type="FunFam" id="1.10.10.10:FF:000160">
    <property type="entry name" value="HTH-type transcriptional regulator UlaR"/>
    <property type="match status" value="1"/>
</dbReference>
<dbReference type="Gene3D" id="1.10.10.10">
    <property type="entry name" value="Winged helix-like DNA-binding domain superfamily/Winged helix DNA-binding domain"/>
    <property type="match status" value="1"/>
</dbReference>
<dbReference type="HAMAP" id="MF_01563">
    <property type="entry name" value="HTH_type_UlaR"/>
    <property type="match status" value="1"/>
</dbReference>
<dbReference type="InterPro" id="IPR050313">
    <property type="entry name" value="Carb_Metab_HTH_regulators"/>
</dbReference>
<dbReference type="InterPro" id="IPR014036">
    <property type="entry name" value="DeoR-like_C"/>
</dbReference>
<dbReference type="InterPro" id="IPR001034">
    <property type="entry name" value="DeoR_HTH"/>
</dbReference>
<dbReference type="InterPro" id="IPR037171">
    <property type="entry name" value="NagB/RpiA_transferase-like"/>
</dbReference>
<dbReference type="InterPro" id="IPR018356">
    <property type="entry name" value="Tscrpt_reg_HTH_DeoR_CS"/>
</dbReference>
<dbReference type="InterPro" id="IPR023711">
    <property type="entry name" value="Tscrpt_reg_HTH_UlaR"/>
</dbReference>
<dbReference type="InterPro" id="IPR036388">
    <property type="entry name" value="WH-like_DNA-bd_sf"/>
</dbReference>
<dbReference type="InterPro" id="IPR036390">
    <property type="entry name" value="WH_DNA-bd_sf"/>
</dbReference>
<dbReference type="NCBIfam" id="NF010034">
    <property type="entry name" value="PRK13509.1"/>
    <property type="match status" value="1"/>
</dbReference>
<dbReference type="PANTHER" id="PTHR30363">
    <property type="entry name" value="HTH-TYPE TRANSCRIPTIONAL REGULATOR SRLR-RELATED"/>
    <property type="match status" value="1"/>
</dbReference>
<dbReference type="PANTHER" id="PTHR30363:SF55">
    <property type="entry name" value="HTH-TYPE TRANSCRIPTIONAL REGULATOR ULAR"/>
    <property type="match status" value="1"/>
</dbReference>
<dbReference type="Pfam" id="PF00455">
    <property type="entry name" value="DeoRC"/>
    <property type="match status" value="1"/>
</dbReference>
<dbReference type="Pfam" id="PF08220">
    <property type="entry name" value="HTH_DeoR"/>
    <property type="match status" value="1"/>
</dbReference>
<dbReference type="PRINTS" id="PR00037">
    <property type="entry name" value="HTHLACR"/>
</dbReference>
<dbReference type="SMART" id="SM01134">
    <property type="entry name" value="DeoRC"/>
    <property type="match status" value="1"/>
</dbReference>
<dbReference type="SMART" id="SM00420">
    <property type="entry name" value="HTH_DEOR"/>
    <property type="match status" value="1"/>
</dbReference>
<dbReference type="SUPFAM" id="SSF100950">
    <property type="entry name" value="NagB/RpiA/CoA transferase-like"/>
    <property type="match status" value="1"/>
</dbReference>
<dbReference type="SUPFAM" id="SSF46785">
    <property type="entry name" value="Winged helix' DNA-binding domain"/>
    <property type="match status" value="1"/>
</dbReference>
<dbReference type="PROSITE" id="PS00894">
    <property type="entry name" value="HTH_DEOR_1"/>
    <property type="match status" value="1"/>
</dbReference>
<dbReference type="PROSITE" id="PS51000">
    <property type="entry name" value="HTH_DEOR_2"/>
    <property type="match status" value="1"/>
</dbReference>
<reference key="1">
    <citation type="journal article" date="2001" name="Nature">
        <title>Genome sequence of enterohaemorrhagic Escherichia coli O157:H7.</title>
        <authorList>
            <person name="Perna N.T."/>
            <person name="Plunkett G. III"/>
            <person name="Burland V."/>
            <person name="Mau B."/>
            <person name="Glasner J.D."/>
            <person name="Rose D.J."/>
            <person name="Mayhew G.F."/>
            <person name="Evans P.S."/>
            <person name="Gregor J."/>
            <person name="Kirkpatrick H.A."/>
            <person name="Posfai G."/>
            <person name="Hackett J."/>
            <person name="Klink S."/>
            <person name="Boutin A."/>
            <person name="Shao Y."/>
            <person name="Miller L."/>
            <person name="Grotbeck E.J."/>
            <person name="Davis N.W."/>
            <person name="Lim A."/>
            <person name="Dimalanta E.T."/>
            <person name="Potamousis K."/>
            <person name="Apodaca J."/>
            <person name="Anantharaman T.S."/>
            <person name="Lin J."/>
            <person name="Yen G."/>
            <person name="Schwartz D.C."/>
            <person name="Welch R.A."/>
            <person name="Blattner F.R."/>
        </authorList>
    </citation>
    <scope>NUCLEOTIDE SEQUENCE [LARGE SCALE GENOMIC DNA]</scope>
    <source>
        <strain>O157:H7 / EDL933 / ATCC 700927 / EHEC</strain>
    </source>
</reference>
<reference key="2">
    <citation type="journal article" date="2001" name="DNA Res.">
        <title>Complete genome sequence of enterohemorrhagic Escherichia coli O157:H7 and genomic comparison with a laboratory strain K-12.</title>
        <authorList>
            <person name="Hayashi T."/>
            <person name="Makino K."/>
            <person name="Ohnishi M."/>
            <person name="Kurokawa K."/>
            <person name="Ishii K."/>
            <person name="Yokoyama K."/>
            <person name="Han C.-G."/>
            <person name="Ohtsubo E."/>
            <person name="Nakayama K."/>
            <person name="Murata T."/>
            <person name="Tanaka M."/>
            <person name="Tobe T."/>
            <person name="Iida T."/>
            <person name="Takami H."/>
            <person name="Honda T."/>
            <person name="Sasakawa C."/>
            <person name="Ogasawara N."/>
            <person name="Yasunaga T."/>
            <person name="Kuhara S."/>
            <person name="Shiba T."/>
            <person name="Hattori M."/>
            <person name="Shinagawa H."/>
        </authorList>
    </citation>
    <scope>NUCLEOTIDE SEQUENCE [LARGE SCALE GENOMIC DNA]</scope>
    <source>
        <strain>O157:H7 / Sakai / RIMD 0509952 / EHEC</strain>
    </source>
</reference>
<proteinExistence type="inferred from homology"/>
<gene>
    <name evidence="1" type="primary">ulaR</name>
    <name type="ordered locus">Z5800</name>
    <name type="ordered locus">ECs5167</name>
</gene>
<name>ULAR_ECO57</name>
<comment type="function">
    <text evidence="1">Represses ulaG and the ulaABCDEF operon.</text>
</comment>
<comment type="subcellular location">
    <subcellularLocation>
        <location evidence="1">Cytoplasm</location>
    </subcellularLocation>
</comment>
<protein>
    <recommendedName>
        <fullName evidence="1">HTH-type transcriptional regulator UlaR</fullName>
    </recommendedName>
</protein>
<sequence length="251" mass="27602">MTEAQRHQILLEMLAQLGFVTVEKVVERLGISPATARRDINKLDESGKLKKVRNGAEAITQQRPRWTPMNLHQAQNHDEKVRIAKAASQLVNPGESVVINCGSTAFLLGREMCGKPVQIITNYLPLANYLIDQEHDSVIIMGGQYNKSQSITLSPQGSENSLYAGHWMFTSGKGLTAEGLYKTDMLTAMAEQKMLSVVGKLVVLVDSSKIGERAGMLFSRADQIDMLITGKNANPEILQQLEAQGVSILRV</sequence>